<name>CDC67_HALSA</name>
<feature type="chain" id="PRO_0000150998" description="ORC1-type DNA replication protein 7">
    <location>
        <begin position="1"/>
        <end position="518"/>
    </location>
</feature>
<feature type="region of interest" description="Disordered" evidence="2">
    <location>
        <begin position="165"/>
        <end position="196"/>
    </location>
</feature>
<feature type="compositionally biased region" description="Low complexity" evidence="2">
    <location>
        <begin position="186"/>
        <end position="196"/>
    </location>
</feature>
<feature type="binding site" evidence="1">
    <location>
        <begin position="94"/>
        <end position="98"/>
    </location>
    <ligand>
        <name>ATP</name>
        <dbReference type="ChEBI" id="CHEBI:30616"/>
    </ligand>
</feature>
<feature type="binding site" evidence="1">
    <location>
        <position position="318"/>
    </location>
    <ligand>
        <name>ATP</name>
        <dbReference type="ChEBI" id="CHEBI:30616"/>
    </ligand>
</feature>
<feature type="binding site" evidence="1">
    <location>
        <position position="330"/>
    </location>
    <ligand>
        <name>ATP</name>
        <dbReference type="ChEBI" id="CHEBI:30616"/>
    </ligand>
</feature>
<organism>
    <name type="scientific">Halobacterium salinarum (strain ATCC 700922 / JCM 11081 / NRC-1)</name>
    <name type="common">Halobacterium halobium</name>
    <dbReference type="NCBI Taxonomy" id="64091"/>
    <lineage>
        <taxon>Archaea</taxon>
        <taxon>Methanobacteriati</taxon>
        <taxon>Methanobacteriota</taxon>
        <taxon>Stenosarchaea group</taxon>
        <taxon>Halobacteria</taxon>
        <taxon>Halobacteriales</taxon>
        <taxon>Halobacteriaceae</taxon>
        <taxon>Halobacterium</taxon>
        <taxon>Halobacterium salinarum NRC-34001</taxon>
    </lineage>
</organism>
<proteinExistence type="inferred from homology"/>
<keyword id="KW-0067">ATP-binding</keyword>
<keyword id="KW-0235">DNA replication</keyword>
<keyword id="KW-0547">Nucleotide-binding</keyword>
<keyword id="KW-1185">Reference proteome</keyword>
<accession>Q9HMS3</accession>
<reference key="1">
    <citation type="journal article" date="2000" name="Proc. Natl. Acad. Sci. U.S.A.">
        <title>Genome sequence of Halobacterium species NRC-1.</title>
        <authorList>
            <person name="Ng W.V."/>
            <person name="Kennedy S.P."/>
            <person name="Mahairas G.G."/>
            <person name="Berquist B."/>
            <person name="Pan M."/>
            <person name="Shukla H.D."/>
            <person name="Lasky S.R."/>
            <person name="Baliga N.S."/>
            <person name="Thorsson V."/>
            <person name="Sbrogna J."/>
            <person name="Swartzell S."/>
            <person name="Weir D."/>
            <person name="Hall J."/>
            <person name="Dahl T.A."/>
            <person name="Welti R."/>
            <person name="Goo Y.A."/>
            <person name="Leithauser B."/>
            <person name="Keller K."/>
            <person name="Cruz R."/>
            <person name="Danson M.J."/>
            <person name="Hough D.W."/>
            <person name="Maddocks D.G."/>
            <person name="Jablonski P.E."/>
            <person name="Krebs M.P."/>
            <person name="Angevine C.M."/>
            <person name="Dale H."/>
            <person name="Isenbarger T.A."/>
            <person name="Peck R.F."/>
            <person name="Pohlschroder M."/>
            <person name="Spudich J.L."/>
            <person name="Jung K.-H."/>
            <person name="Alam M."/>
            <person name="Freitas T."/>
            <person name="Hou S."/>
            <person name="Daniels C.J."/>
            <person name="Dennis P.P."/>
            <person name="Omer A.D."/>
            <person name="Ebhardt H."/>
            <person name="Lowe T.M."/>
            <person name="Liang P."/>
            <person name="Riley M."/>
            <person name="Hood L."/>
            <person name="DasSarma S."/>
        </authorList>
    </citation>
    <scope>NUCLEOTIDE SEQUENCE [LARGE SCALE GENOMIC DNA]</scope>
    <source>
        <strain>ATCC 700922 / JCM 11081 / NRC-1</strain>
    </source>
</reference>
<reference key="2">
    <citation type="journal article" date="2003" name="J. Bacteriol.">
        <title>An archaeal chromosomal autonomously replicating sequence element from an extreme halophile, Halobacterium sp. strain NRC-1.</title>
        <authorList>
            <person name="Berquist B.R."/>
            <person name="DasSarma S."/>
        </authorList>
    </citation>
    <scope>FUNCTION</scope>
    <source>
        <strain>ATCC 700922 / JCM 11081 / NRC-1</strain>
    </source>
</reference>
<reference key="3">
    <citation type="journal article" date="2007" name="BMC Genet.">
        <title>Essential and non-essential DNA replication genes in the model halophilic Archaeon, Halobacterium sp. NRC-1.</title>
        <authorList>
            <person name="Berquist B.R."/>
            <person name="DasSarma P."/>
            <person name="DasSarma S."/>
        </authorList>
    </citation>
    <scope>DISRUPTION PHENOTYPE</scope>
    <source>
        <strain>ATCC 700922 / JCM 11081 / NRC-1</strain>
    </source>
</reference>
<reference key="4">
    <citation type="journal article" date="2009" name="J. Bacteriol.">
        <title>Multiple replication origins of Halobacterium sp. strain NRC-1: properties of the conserved orc7-dependent oriC1.</title>
        <authorList>
            <person name="Coker J.A."/>
            <person name="DasSarma P."/>
            <person name="Capes M."/>
            <person name="Wallace T."/>
            <person name="McGarrity K."/>
            <person name="Gessler R."/>
            <person name="Liu J."/>
            <person name="Xiang H."/>
            <person name="Tatusov R."/>
            <person name="Berquist B.R."/>
            <person name="DasSarma S."/>
        </authorList>
    </citation>
    <scope>FUNCTION</scope>
    <source>
        <strain>ATCC 700922 / JCM 11081 / NRC-1</strain>
    </source>
</reference>
<dbReference type="EMBL" id="AE004437">
    <property type="protein sequence ID" value="AAG20498.1"/>
    <property type="molecule type" value="Genomic_DNA"/>
</dbReference>
<dbReference type="PIR" id="F84391">
    <property type="entry name" value="F84391"/>
</dbReference>
<dbReference type="RefSeq" id="WP_010903800.1">
    <property type="nucleotide sequence ID" value="NC_002607.1"/>
</dbReference>
<dbReference type="SMR" id="Q9HMS3"/>
<dbReference type="STRING" id="64091.VNG_2411G"/>
<dbReference type="PaxDb" id="64091-VNG_2411G"/>
<dbReference type="GeneID" id="68694935"/>
<dbReference type="KEGG" id="hal:VNG_2411G"/>
<dbReference type="PATRIC" id="fig|64091.14.peg.1865"/>
<dbReference type="HOGENOM" id="CLU_025112_3_1_2"/>
<dbReference type="InParanoid" id="Q9HMS3"/>
<dbReference type="OrthoDB" id="195574at2157"/>
<dbReference type="PhylomeDB" id="Q9HMS3"/>
<dbReference type="Proteomes" id="UP000000554">
    <property type="component" value="Chromosome"/>
</dbReference>
<dbReference type="GO" id="GO:0005524">
    <property type="term" value="F:ATP binding"/>
    <property type="evidence" value="ECO:0007669"/>
    <property type="project" value="UniProtKB-UniRule"/>
</dbReference>
<dbReference type="GO" id="GO:0016887">
    <property type="term" value="F:ATP hydrolysis activity"/>
    <property type="evidence" value="ECO:0007669"/>
    <property type="project" value="InterPro"/>
</dbReference>
<dbReference type="GO" id="GO:0006260">
    <property type="term" value="P:DNA replication"/>
    <property type="evidence" value="ECO:0007669"/>
    <property type="project" value="UniProtKB-UniRule"/>
</dbReference>
<dbReference type="CDD" id="cd08768">
    <property type="entry name" value="Cdc6_C"/>
    <property type="match status" value="1"/>
</dbReference>
<dbReference type="FunFam" id="1.10.10.10:FF:000502">
    <property type="entry name" value="ORC1-type DNA replication protein"/>
    <property type="match status" value="1"/>
</dbReference>
<dbReference type="FunFam" id="1.10.8.60:FF:000073">
    <property type="entry name" value="ORC1-type DNA replication protein"/>
    <property type="match status" value="1"/>
</dbReference>
<dbReference type="Gene3D" id="1.10.8.60">
    <property type="match status" value="1"/>
</dbReference>
<dbReference type="Gene3D" id="3.40.50.300">
    <property type="entry name" value="P-loop containing nucleotide triphosphate hydrolases"/>
    <property type="match status" value="1"/>
</dbReference>
<dbReference type="Gene3D" id="1.10.10.10">
    <property type="entry name" value="Winged helix-like DNA-binding domain superfamily/Winged helix DNA-binding domain"/>
    <property type="match status" value="1"/>
</dbReference>
<dbReference type="HAMAP" id="MF_01407">
    <property type="entry name" value="ORC1_type_DNA_replic_protein"/>
    <property type="match status" value="1"/>
</dbReference>
<dbReference type="InterPro" id="IPR003593">
    <property type="entry name" value="AAA+_ATPase"/>
</dbReference>
<dbReference type="InterPro" id="IPR041664">
    <property type="entry name" value="AAA_16"/>
</dbReference>
<dbReference type="InterPro" id="IPR015163">
    <property type="entry name" value="Cdc6_C"/>
</dbReference>
<dbReference type="InterPro" id="IPR055237">
    <property type="entry name" value="Cdc6_lid"/>
</dbReference>
<dbReference type="InterPro" id="IPR050311">
    <property type="entry name" value="ORC1/CDC6"/>
</dbReference>
<dbReference type="InterPro" id="IPR014277">
    <property type="entry name" value="Orc1/Cdc6_arc"/>
</dbReference>
<dbReference type="InterPro" id="IPR027417">
    <property type="entry name" value="P-loop_NTPase"/>
</dbReference>
<dbReference type="InterPro" id="IPR036388">
    <property type="entry name" value="WH-like_DNA-bd_sf"/>
</dbReference>
<dbReference type="InterPro" id="IPR036390">
    <property type="entry name" value="WH_DNA-bd_sf"/>
</dbReference>
<dbReference type="NCBIfam" id="TIGR02928">
    <property type="entry name" value="orc1/cdc6 family replication initiation protein"/>
    <property type="match status" value="1"/>
</dbReference>
<dbReference type="PANTHER" id="PTHR10763">
    <property type="entry name" value="CELL DIVISION CONTROL PROTEIN 6-RELATED"/>
    <property type="match status" value="1"/>
</dbReference>
<dbReference type="PANTHER" id="PTHR10763:SF22">
    <property type="entry name" value="ORC1-TYPE DNA REPLICATION PROTEIN"/>
    <property type="match status" value="1"/>
</dbReference>
<dbReference type="Pfam" id="PF13191">
    <property type="entry name" value="AAA_16"/>
    <property type="match status" value="1"/>
</dbReference>
<dbReference type="Pfam" id="PF09079">
    <property type="entry name" value="Cdc6_C"/>
    <property type="match status" value="1"/>
</dbReference>
<dbReference type="Pfam" id="PF22703">
    <property type="entry name" value="Cdc6_lid"/>
    <property type="match status" value="1"/>
</dbReference>
<dbReference type="SMART" id="SM00382">
    <property type="entry name" value="AAA"/>
    <property type="match status" value="1"/>
</dbReference>
<dbReference type="SMART" id="SM01074">
    <property type="entry name" value="Cdc6_C"/>
    <property type="match status" value="1"/>
</dbReference>
<dbReference type="SUPFAM" id="SSF52540">
    <property type="entry name" value="P-loop containing nucleoside triphosphate hydrolases"/>
    <property type="match status" value="1"/>
</dbReference>
<dbReference type="SUPFAM" id="SSF46785">
    <property type="entry name" value="Winged helix' DNA-binding domain"/>
    <property type="match status" value="1"/>
</dbReference>
<sequence length="518" mass="58055">MTDDRSTDERRTADRDFEVDLDDVLDDEDDDEGLFDDLLSGEPIFENKEVLRPSYTPHELPHRNDQINNMATILVAALRGETPSNILIYGKTGTGKTASAKFVSQELEKTSKKYDVPCEVEYINCEVTDTQYRVLAQLANTFIDQNRAFVDARIADLSDLRAQADDDPNALEIGGSPGDDRTGNESSEGSDVSDSFSDLRERFDSVAEIDDRIDSLEADKAEMEQVPMTGWPTDRVYATFFDAVDYVERVAVIMLDEIDKLVEKSGDDTLYNLSRMNSELDNSRVSIIGISNDLKFTDFLDPRVKSSLGEEEIVFPPYDANQLRDILQHRSDVAFKADALSDDVLPLCAAFAAQEHGDARRALDLLRTAGELAERDQAENVTEDHVRRAQDKIELDRVVEVVRTLPTQSKLVLYAILLLEDNGVHNVNTGEVYNIYKTLCDELDADVLTQRRVTDLISELDMLGIVNAVVVSKGRYGRTKEISLSVPVEETEAVLEADSRLSDIEDITPFVQARFENN</sequence>
<gene>
    <name type="primary">orc7</name>
    <name type="ordered locus">VNG_2411G</name>
</gene>
<protein>
    <recommendedName>
        <fullName evidence="1">ORC1-type DNA replication protein 7</fullName>
    </recommendedName>
</protein>
<evidence type="ECO:0000255" key="1">
    <source>
        <dbReference type="HAMAP-Rule" id="MF_01407"/>
    </source>
</evidence>
<evidence type="ECO:0000256" key="2">
    <source>
        <dbReference type="SAM" id="MobiDB-lite"/>
    </source>
</evidence>
<evidence type="ECO:0000269" key="3">
    <source>
    </source>
</evidence>
<evidence type="ECO:0000269" key="4">
    <source>
    </source>
</evidence>
<evidence type="ECO:0000269" key="5">
    <source>
    </source>
</evidence>
<comment type="function">
    <text evidence="1 3 5">Involved in regulation of DNA replication. Required to initiate DNA replication of the circular chromosome at a nearby autonomously replicating sequence (ARS) oriC1.</text>
</comment>
<comment type="disruption phenotype">
    <text evidence="4">Not essential for normal growth.</text>
</comment>
<comment type="similarity">
    <text evidence="1">Belongs to the CDC6/cdc18 family.</text>
</comment>